<comment type="function">
    <text>Removal of H(2)O(2), oxidation of toxic reductants, biosynthesis and degradation of lignin, suberization, auxin catabolism, response to environmental stresses such as wounding, pathogen attack and oxidative stress. These functions might be dependent on each isozyme/isoform in each plant tissue.</text>
</comment>
<comment type="catalytic activity">
    <reaction>
        <text>2 a phenolic donor + H2O2 = 2 a phenolic radical donor + 2 H2O</text>
        <dbReference type="Rhea" id="RHEA:56136"/>
        <dbReference type="ChEBI" id="CHEBI:15377"/>
        <dbReference type="ChEBI" id="CHEBI:16240"/>
        <dbReference type="ChEBI" id="CHEBI:139520"/>
        <dbReference type="ChEBI" id="CHEBI:139521"/>
        <dbReference type="EC" id="1.11.1.7"/>
    </reaction>
</comment>
<comment type="cofactor">
    <cofactor evidence="2">
        <name>heme b</name>
        <dbReference type="ChEBI" id="CHEBI:60344"/>
    </cofactor>
    <text evidence="2">Binds 1 heme b (iron(II)-protoporphyrin IX) group per subunit.</text>
</comment>
<comment type="cofactor">
    <cofactor evidence="2">
        <name>Ca(2+)</name>
        <dbReference type="ChEBI" id="CHEBI:29108"/>
    </cofactor>
    <text evidence="2">Binds 2 calcium ions per subunit.</text>
</comment>
<comment type="subcellular location">
    <subcellularLocation>
        <location evidence="2">Secreted</location>
    </subcellularLocation>
</comment>
<comment type="tissue specificity">
    <text>Expressed in the whole plant, but preferentially in roots.</text>
</comment>
<comment type="induction">
    <text evidence="3 4">Pathogen and elicitor-induced. Up-regulated transiently by a cold treatment.</text>
</comment>
<comment type="miscellaneous">
    <text>There are 73 peroxidase genes in A.thaliana.</text>
</comment>
<comment type="similarity">
    <text evidence="2">Belongs to the peroxidase family. Classical plant (class III) peroxidase subfamily.</text>
</comment>
<protein>
    <recommendedName>
        <fullName>Peroxidase 64</fullName>
        <shortName>Atperox P64</shortName>
        <ecNumber>1.11.1.7</ecNumber>
    </recommendedName>
    <alternativeName>
        <fullName>ATP17a</fullName>
    </alternativeName>
    <alternativeName>
        <fullName>PRXR4</fullName>
    </alternativeName>
</protein>
<dbReference type="EC" id="1.11.1.7"/>
<dbReference type="EMBL" id="X98316">
    <property type="protein sequence ID" value="CAA66960.1"/>
    <property type="molecule type" value="mRNA"/>
</dbReference>
<dbReference type="EMBL" id="X99096">
    <property type="protein sequence ID" value="CAA67550.1"/>
    <property type="molecule type" value="mRNA"/>
</dbReference>
<dbReference type="EMBL" id="AB017067">
    <property type="protein sequence ID" value="BAB08451.1"/>
    <property type="molecule type" value="Genomic_DNA"/>
</dbReference>
<dbReference type="EMBL" id="CP002688">
    <property type="protein sequence ID" value="AED94776.1"/>
    <property type="molecule type" value="Genomic_DNA"/>
</dbReference>
<dbReference type="EMBL" id="AY063962">
    <property type="protein sequence ID" value="AAL36318.1"/>
    <property type="molecule type" value="mRNA"/>
</dbReference>
<dbReference type="EMBL" id="AY096403">
    <property type="protein sequence ID" value="AAM20043.1"/>
    <property type="molecule type" value="mRNA"/>
</dbReference>
<dbReference type="RefSeq" id="NP_199033.1">
    <property type="nucleotide sequence ID" value="NM_123583.4"/>
</dbReference>
<dbReference type="SMR" id="Q43872"/>
<dbReference type="FunCoup" id="Q43872">
    <property type="interactions" value="148"/>
</dbReference>
<dbReference type="STRING" id="3702.Q43872"/>
<dbReference type="PeroxiBase" id="230">
    <property type="entry name" value="AtPrx64"/>
</dbReference>
<dbReference type="GlyCosmos" id="Q43872">
    <property type="glycosylation" value="1 site, No reported glycans"/>
</dbReference>
<dbReference type="GlyGen" id="Q43872">
    <property type="glycosylation" value="2 sites"/>
</dbReference>
<dbReference type="iPTMnet" id="Q43872"/>
<dbReference type="PaxDb" id="3702-AT5G42180.1"/>
<dbReference type="ProteomicsDB" id="236452"/>
<dbReference type="EnsemblPlants" id="AT5G42180.1">
    <property type="protein sequence ID" value="AT5G42180.1"/>
    <property type="gene ID" value="AT5G42180"/>
</dbReference>
<dbReference type="GeneID" id="834223"/>
<dbReference type="Gramene" id="AT5G42180.1">
    <property type="protein sequence ID" value="AT5G42180.1"/>
    <property type="gene ID" value="AT5G42180"/>
</dbReference>
<dbReference type="KEGG" id="ath:AT5G42180"/>
<dbReference type="Araport" id="AT5G42180"/>
<dbReference type="TAIR" id="AT5G42180">
    <property type="gene designation" value="PER64"/>
</dbReference>
<dbReference type="eggNOG" id="ENOG502QSER">
    <property type="taxonomic scope" value="Eukaryota"/>
</dbReference>
<dbReference type="HOGENOM" id="CLU_010543_0_3_1"/>
<dbReference type="InParanoid" id="Q43872"/>
<dbReference type="OMA" id="MIDCTSA"/>
<dbReference type="PhylomeDB" id="Q43872"/>
<dbReference type="BioCyc" id="ARA:AT5G42180-MONOMER"/>
<dbReference type="PRO" id="PR:Q43872"/>
<dbReference type="Proteomes" id="UP000006548">
    <property type="component" value="Chromosome 5"/>
</dbReference>
<dbReference type="ExpressionAtlas" id="Q43872">
    <property type="expression patterns" value="baseline and differential"/>
</dbReference>
<dbReference type="GO" id="GO:0005576">
    <property type="term" value="C:extracellular region"/>
    <property type="evidence" value="ECO:0007669"/>
    <property type="project" value="UniProtKB-SubCell"/>
</dbReference>
<dbReference type="GO" id="GO:0009505">
    <property type="term" value="C:plant-type cell wall"/>
    <property type="evidence" value="ECO:0007005"/>
    <property type="project" value="TAIR"/>
</dbReference>
<dbReference type="GO" id="GO:0020037">
    <property type="term" value="F:heme binding"/>
    <property type="evidence" value="ECO:0007669"/>
    <property type="project" value="InterPro"/>
</dbReference>
<dbReference type="GO" id="GO:0140825">
    <property type="term" value="F:lactoperoxidase activity"/>
    <property type="evidence" value="ECO:0007669"/>
    <property type="project" value="UniProtKB-EC"/>
</dbReference>
<dbReference type="GO" id="GO:0046872">
    <property type="term" value="F:metal ion binding"/>
    <property type="evidence" value="ECO:0007669"/>
    <property type="project" value="UniProtKB-KW"/>
</dbReference>
<dbReference type="GO" id="GO:0042744">
    <property type="term" value="P:hydrogen peroxide catabolic process"/>
    <property type="evidence" value="ECO:0007669"/>
    <property type="project" value="UniProtKB-KW"/>
</dbReference>
<dbReference type="GO" id="GO:0006979">
    <property type="term" value="P:response to oxidative stress"/>
    <property type="evidence" value="ECO:0007669"/>
    <property type="project" value="InterPro"/>
</dbReference>
<dbReference type="CDD" id="cd00693">
    <property type="entry name" value="secretory_peroxidase"/>
    <property type="match status" value="1"/>
</dbReference>
<dbReference type="FunFam" id="1.10.420.10:FF:000006">
    <property type="entry name" value="Peroxidase"/>
    <property type="match status" value="1"/>
</dbReference>
<dbReference type="FunFam" id="1.10.520.10:FF:000001">
    <property type="entry name" value="Peroxidase"/>
    <property type="match status" value="1"/>
</dbReference>
<dbReference type="Gene3D" id="1.10.520.10">
    <property type="match status" value="1"/>
</dbReference>
<dbReference type="Gene3D" id="1.10.420.10">
    <property type="entry name" value="Peroxidase, domain 2"/>
    <property type="match status" value="1"/>
</dbReference>
<dbReference type="InterPro" id="IPR002016">
    <property type="entry name" value="Haem_peroxidase"/>
</dbReference>
<dbReference type="InterPro" id="IPR010255">
    <property type="entry name" value="Haem_peroxidase_sf"/>
</dbReference>
<dbReference type="InterPro" id="IPR000823">
    <property type="entry name" value="Peroxidase_pln"/>
</dbReference>
<dbReference type="InterPro" id="IPR019793">
    <property type="entry name" value="Peroxidases_heam-ligand_BS"/>
</dbReference>
<dbReference type="InterPro" id="IPR033905">
    <property type="entry name" value="Secretory_peroxidase"/>
</dbReference>
<dbReference type="PANTHER" id="PTHR31235">
    <property type="entry name" value="PEROXIDASE 25-RELATED"/>
    <property type="match status" value="1"/>
</dbReference>
<dbReference type="Pfam" id="PF00141">
    <property type="entry name" value="peroxidase"/>
    <property type="match status" value="1"/>
</dbReference>
<dbReference type="PRINTS" id="PR00458">
    <property type="entry name" value="PEROXIDASE"/>
</dbReference>
<dbReference type="PRINTS" id="PR00461">
    <property type="entry name" value="PLPEROXIDASE"/>
</dbReference>
<dbReference type="SUPFAM" id="SSF48113">
    <property type="entry name" value="Heme-dependent peroxidases"/>
    <property type="match status" value="1"/>
</dbReference>
<dbReference type="PROSITE" id="PS00435">
    <property type="entry name" value="PEROXIDASE_1"/>
    <property type="match status" value="1"/>
</dbReference>
<dbReference type="PROSITE" id="PS50873">
    <property type="entry name" value="PEROXIDASE_4"/>
    <property type="match status" value="1"/>
</dbReference>
<evidence type="ECO:0000255" key="1"/>
<evidence type="ECO:0000255" key="2">
    <source>
        <dbReference type="PROSITE-ProRule" id="PRU00297"/>
    </source>
</evidence>
<evidence type="ECO:0000269" key="3">
    <source>
    </source>
</evidence>
<evidence type="ECO:0000269" key="4">
    <source>
    </source>
</evidence>
<name>PER64_ARATH</name>
<reference key="1">
    <citation type="online journal article" date="1996" name="Plant Gene Register">
        <title>Eleven cDNA clones from Arabidopsis thaliana encoding isoperoxidases.</title>
        <authorList>
            <person name="Capelli N."/>
            <person name="Tognolli M."/>
            <person name="Flach J."/>
            <person name="Overney S."/>
            <person name="Penel C."/>
            <person name="Greppin H."/>
            <person name="Simon P."/>
        </authorList>
        <locator>PGR96-066</locator>
    </citation>
    <scope>NUCLEOTIDE SEQUENCE [MRNA]</scope>
    <source>
        <strain>cv. Columbia</strain>
    </source>
</reference>
<reference key="2">
    <citation type="submission" date="1996-07" db="EMBL/GenBank/DDBJ databases">
        <title>From expressed sequence tags to structure, function, evolution and expression of 28 ER-targeted Arabidopsis peroxidases.</title>
        <authorList>
            <person name="Welinder K.G."/>
            <person name="Jespersen H.M."/>
            <person name="Kjaersgaard I.V.H."/>
            <person name="Justesen A.F."/>
            <person name="Oestergaard L."/>
            <person name="Abelskov A.K."/>
            <person name="Jensen R.B."/>
            <person name="Hansen L.N."/>
            <person name="Rasmussen S.K."/>
        </authorList>
    </citation>
    <scope>NUCLEOTIDE SEQUENCE [MRNA]</scope>
    <source>
        <strain>cv. Columbia</strain>
    </source>
</reference>
<reference key="3">
    <citation type="journal article" date="1999" name="DNA Res.">
        <title>Structural analysis of Arabidopsis thaliana chromosome 5. IX. Sequence features of the regions of 1,011,550 bp covered by seventeen P1 and TAC clones.</title>
        <authorList>
            <person name="Kaneko T."/>
            <person name="Katoh T."/>
            <person name="Sato S."/>
            <person name="Nakamura Y."/>
            <person name="Asamizu E."/>
            <person name="Kotani H."/>
            <person name="Miyajima N."/>
            <person name="Tabata S."/>
        </authorList>
    </citation>
    <scope>NUCLEOTIDE SEQUENCE [LARGE SCALE GENOMIC DNA]</scope>
    <source>
        <strain>cv. Columbia</strain>
    </source>
</reference>
<reference key="4">
    <citation type="journal article" date="2017" name="Plant J.">
        <title>Araport11: a complete reannotation of the Arabidopsis thaliana reference genome.</title>
        <authorList>
            <person name="Cheng C.Y."/>
            <person name="Krishnakumar V."/>
            <person name="Chan A.P."/>
            <person name="Thibaud-Nissen F."/>
            <person name="Schobel S."/>
            <person name="Town C.D."/>
        </authorList>
    </citation>
    <scope>GENOME REANNOTATION</scope>
    <source>
        <strain>cv. Columbia</strain>
    </source>
</reference>
<reference key="5">
    <citation type="journal article" date="2003" name="Science">
        <title>Empirical analysis of transcriptional activity in the Arabidopsis genome.</title>
        <authorList>
            <person name="Yamada K."/>
            <person name="Lim J."/>
            <person name="Dale J.M."/>
            <person name="Chen H."/>
            <person name="Shinn P."/>
            <person name="Palm C.J."/>
            <person name="Southwick A.M."/>
            <person name="Wu H.C."/>
            <person name="Kim C.J."/>
            <person name="Nguyen M."/>
            <person name="Pham P.K."/>
            <person name="Cheuk R.F."/>
            <person name="Karlin-Newmann G."/>
            <person name="Liu S.X."/>
            <person name="Lam B."/>
            <person name="Sakano H."/>
            <person name="Wu T."/>
            <person name="Yu G."/>
            <person name="Miranda M."/>
            <person name="Quach H.L."/>
            <person name="Tripp M."/>
            <person name="Chang C.H."/>
            <person name="Lee J.M."/>
            <person name="Toriumi M.J."/>
            <person name="Chan M.M."/>
            <person name="Tang C.C."/>
            <person name="Onodera C.S."/>
            <person name="Deng J.M."/>
            <person name="Akiyama K."/>
            <person name="Ansari Y."/>
            <person name="Arakawa T."/>
            <person name="Banh J."/>
            <person name="Banno F."/>
            <person name="Bowser L."/>
            <person name="Brooks S.Y."/>
            <person name="Carninci P."/>
            <person name="Chao Q."/>
            <person name="Choy N."/>
            <person name="Enju A."/>
            <person name="Goldsmith A.D."/>
            <person name="Gurjal M."/>
            <person name="Hansen N.F."/>
            <person name="Hayashizaki Y."/>
            <person name="Johnson-Hopson C."/>
            <person name="Hsuan V.W."/>
            <person name="Iida K."/>
            <person name="Karnes M."/>
            <person name="Khan S."/>
            <person name="Koesema E."/>
            <person name="Ishida J."/>
            <person name="Jiang P.X."/>
            <person name="Jones T."/>
            <person name="Kawai J."/>
            <person name="Kamiya A."/>
            <person name="Meyers C."/>
            <person name="Nakajima M."/>
            <person name="Narusaka M."/>
            <person name="Seki M."/>
            <person name="Sakurai T."/>
            <person name="Satou M."/>
            <person name="Tamse R."/>
            <person name="Vaysberg M."/>
            <person name="Wallender E.K."/>
            <person name="Wong C."/>
            <person name="Yamamura Y."/>
            <person name="Yuan S."/>
            <person name="Shinozaki K."/>
            <person name="Davis R.W."/>
            <person name="Theologis A."/>
            <person name="Ecker J.R."/>
        </authorList>
    </citation>
    <scope>NUCLEOTIDE SEQUENCE [LARGE SCALE MRNA]</scope>
    <source>
        <strain>cv. Columbia</strain>
    </source>
</reference>
<reference key="6">
    <citation type="journal article" date="1998" name="FEBS Lett.">
        <title>Computational analyses and annotations of the Arabidopsis peroxidase gene family.</title>
        <authorList>
            <person name="Oestergaard L."/>
            <person name="Pedersen A.G."/>
            <person name="Jespersen H.M."/>
            <person name="Brunak S."/>
            <person name="Welinder K.G."/>
        </authorList>
    </citation>
    <scope>CHARACTERIZATION</scope>
    <source>
        <strain>cv. Columbia</strain>
    </source>
</reference>
<reference key="7">
    <citation type="journal article" date="1993" name="Plant Mol. Biol.">
        <title>Isolation of putative defense-related genes from Arabidopsis thaliana and expression in fungal elicitor-treated cells.</title>
        <authorList>
            <person name="Trezzini G.F."/>
            <person name="Horrichs A."/>
            <person name="Somssich I.E."/>
        </authorList>
    </citation>
    <scope>INDUCTION</scope>
    <source>
        <strain>cv. Columbia</strain>
    </source>
</reference>
<reference key="8">
    <citation type="journal article" date="2002" name="Plant Cell">
        <title>Arabidopsis transcriptome profiling indicates that multiple regulatory pathways are activated during cold acclimation in addition to the CBF cold response pathway.</title>
        <authorList>
            <person name="Fowler S."/>
            <person name="Thomashow M.F."/>
        </authorList>
    </citation>
    <scope>INDUCTION</scope>
    <source>
        <strain>cv. Columbia</strain>
    </source>
</reference>
<reference key="9">
    <citation type="journal article" date="2002" name="Gene">
        <title>Analysis and expression of the class III peroxidase large gene family in Arabidopsis thaliana.</title>
        <authorList>
            <person name="Tognolli M."/>
            <person name="Penel C."/>
            <person name="Greppin H."/>
            <person name="Simon P."/>
        </authorList>
    </citation>
    <scope>GENE FAMILY ORGANIZATION</scope>
    <scope>NOMENCLATURE</scope>
    <source>
        <strain>cv. Columbia</strain>
    </source>
</reference>
<keyword id="KW-0106">Calcium</keyword>
<keyword id="KW-1015">Disulfide bond</keyword>
<keyword id="KW-0325">Glycoprotein</keyword>
<keyword id="KW-0349">Heme</keyword>
<keyword id="KW-0376">Hydrogen peroxide</keyword>
<keyword id="KW-0408">Iron</keyword>
<keyword id="KW-0479">Metal-binding</keyword>
<keyword id="KW-0560">Oxidoreductase</keyword>
<keyword id="KW-0575">Peroxidase</keyword>
<keyword id="KW-1185">Reference proteome</keyword>
<keyword id="KW-0964">Secreted</keyword>
<keyword id="KW-0732">Signal</keyword>
<sequence>MNAHMLNLLVIVIFVVSFDVQALSPHYYDHTCPQADHIVTNAVKKAMSNDQTVPAALLRMHFHDCFVRGCDGSVLLDSKGKNKAEKDGPPNISLHAFYVIDNAKKALEEQCPGIVSCADILSLAARDAVALSGGPTWAVPKGRKDGRISKAIETRQLPAPTFNISQLRQNFGQRGLSMHDLVALSGGHTLGFAHCSSFQNRLHKFNTQKEVDPTLNPSFAARLEGVCPAHNTVKNAGSNMDGTVTSFDNIYYKMLIQGKSLFSSDESLLAVPSTKKLVAKYANSNEEFERAFVKSMIKMSSISGNGNEVRLNCRRVR</sequence>
<organism>
    <name type="scientific">Arabidopsis thaliana</name>
    <name type="common">Mouse-ear cress</name>
    <dbReference type="NCBI Taxonomy" id="3702"/>
    <lineage>
        <taxon>Eukaryota</taxon>
        <taxon>Viridiplantae</taxon>
        <taxon>Streptophyta</taxon>
        <taxon>Embryophyta</taxon>
        <taxon>Tracheophyta</taxon>
        <taxon>Spermatophyta</taxon>
        <taxon>Magnoliopsida</taxon>
        <taxon>eudicotyledons</taxon>
        <taxon>Gunneridae</taxon>
        <taxon>Pentapetalae</taxon>
        <taxon>rosids</taxon>
        <taxon>malvids</taxon>
        <taxon>Brassicales</taxon>
        <taxon>Brassicaceae</taxon>
        <taxon>Camelineae</taxon>
        <taxon>Arabidopsis</taxon>
    </lineage>
</organism>
<gene>
    <name type="primary">PER64</name>
    <name type="synonym">P64</name>
    <name type="ordered locus">At5g42180</name>
    <name type="ORF">MJC20.29</name>
</gene>
<accession>Q43872</accession>
<feature type="signal peptide" evidence="1">
    <location>
        <begin position="1"/>
        <end position="22"/>
    </location>
</feature>
<feature type="chain" id="PRO_0000023729" description="Peroxidase 64">
    <location>
        <begin position="23"/>
        <end position="317"/>
    </location>
</feature>
<feature type="active site" description="Proton acceptor" evidence="2">
    <location>
        <position position="63"/>
    </location>
</feature>
<feature type="binding site" evidence="2">
    <location>
        <position position="64"/>
    </location>
    <ligand>
        <name>Ca(2+)</name>
        <dbReference type="ChEBI" id="CHEBI:29108"/>
        <label>1</label>
    </ligand>
</feature>
<feature type="binding site" evidence="2">
    <location>
        <position position="67"/>
    </location>
    <ligand>
        <name>Ca(2+)</name>
        <dbReference type="ChEBI" id="CHEBI:29108"/>
        <label>1</label>
    </ligand>
</feature>
<feature type="binding site" evidence="2">
    <location>
        <position position="69"/>
    </location>
    <ligand>
        <name>Ca(2+)</name>
        <dbReference type="ChEBI" id="CHEBI:29108"/>
        <label>1</label>
    </ligand>
</feature>
<feature type="binding site" evidence="2">
    <location>
        <position position="71"/>
    </location>
    <ligand>
        <name>Ca(2+)</name>
        <dbReference type="ChEBI" id="CHEBI:29108"/>
        <label>1</label>
    </ligand>
</feature>
<feature type="binding site" evidence="2">
    <location>
        <position position="73"/>
    </location>
    <ligand>
        <name>Ca(2+)</name>
        <dbReference type="ChEBI" id="CHEBI:29108"/>
        <label>1</label>
    </ligand>
</feature>
<feature type="binding site" evidence="2">
    <location>
        <position position="158"/>
    </location>
    <ligand>
        <name>substrate</name>
    </ligand>
</feature>
<feature type="binding site" description="axial binding residue" evidence="2">
    <location>
        <position position="188"/>
    </location>
    <ligand>
        <name>heme b</name>
        <dbReference type="ChEBI" id="CHEBI:60344"/>
    </ligand>
    <ligandPart>
        <name>Fe</name>
        <dbReference type="ChEBI" id="CHEBI:18248"/>
    </ligandPart>
</feature>
<feature type="binding site" evidence="2">
    <location>
        <position position="189"/>
    </location>
    <ligand>
        <name>Ca(2+)</name>
        <dbReference type="ChEBI" id="CHEBI:29108"/>
        <label>2</label>
    </ligand>
</feature>
<feature type="binding site" evidence="2">
    <location>
        <position position="241"/>
    </location>
    <ligand>
        <name>Ca(2+)</name>
        <dbReference type="ChEBI" id="CHEBI:29108"/>
        <label>2</label>
    </ligand>
</feature>
<feature type="binding site" evidence="2">
    <location>
        <position position="243"/>
    </location>
    <ligand>
        <name>Ca(2+)</name>
        <dbReference type="ChEBI" id="CHEBI:29108"/>
        <label>2</label>
    </ligand>
</feature>
<feature type="binding site" evidence="2">
    <location>
        <position position="248"/>
    </location>
    <ligand>
        <name>Ca(2+)</name>
        <dbReference type="ChEBI" id="CHEBI:29108"/>
        <label>2</label>
    </ligand>
</feature>
<feature type="site" description="Transition state stabilizer" evidence="2">
    <location>
        <position position="59"/>
    </location>
</feature>
<feature type="glycosylation site" description="N-linked (GlcNAc...) asparagine" evidence="1">
    <location>
        <position position="163"/>
    </location>
</feature>
<feature type="disulfide bond" evidence="2">
    <location>
        <begin position="32"/>
        <end position="111"/>
    </location>
</feature>
<feature type="disulfide bond" evidence="2">
    <location>
        <begin position="65"/>
        <end position="70"/>
    </location>
</feature>
<feature type="disulfide bond" evidence="2">
    <location>
        <begin position="117"/>
        <end position="313"/>
    </location>
</feature>
<feature type="disulfide bond" evidence="2">
    <location>
        <begin position="195"/>
        <end position="227"/>
    </location>
</feature>
<proteinExistence type="evidence at protein level"/>